<reference key="1">
    <citation type="submission" date="2008-10" db="EMBL/GenBank/DDBJ databases">
        <title>The complete genome sequence of Helicobacter pylori strain P12.</title>
        <authorList>
            <person name="Fischer W."/>
            <person name="Windhager L."/>
            <person name="Karnholz A."/>
            <person name="Zeiller M."/>
            <person name="Zimmer R."/>
            <person name="Haas R."/>
        </authorList>
    </citation>
    <scope>NUCLEOTIDE SEQUENCE [LARGE SCALE GENOMIC DNA]</scope>
    <source>
        <strain>P12</strain>
    </source>
</reference>
<sequence length="104" mass="11851">MSYAIFKHGGKQYKVVEGDIVLLDKMNKEPKALVELVEVLAVSKEGKLSFGKPFVNGAKIEAEVINEGRGKKVITFKKRRRKDSKTKRGFRRDFTRVRITKIVA</sequence>
<evidence type="ECO:0000255" key="1">
    <source>
        <dbReference type="HAMAP-Rule" id="MF_01363"/>
    </source>
</evidence>
<evidence type="ECO:0000305" key="2"/>
<accession>B6JKM5</accession>
<gene>
    <name evidence="1" type="primary">rplU</name>
    <name type="ordered locus">HPP12_0295</name>
</gene>
<dbReference type="EMBL" id="CP001217">
    <property type="protein sequence ID" value="ACJ07453.1"/>
    <property type="molecule type" value="Genomic_DNA"/>
</dbReference>
<dbReference type="SMR" id="B6JKM5"/>
<dbReference type="KEGG" id="hpp:HPP12_0295"/>
<dbReference type="HOGENOM" id="CLU_061463_3_1_7"/>
<dbReference type="Proteomes" id="UP000008198">
    <property type="component" value="Chromosome"/>
</dbReference>
<dbReference type="GO" id="GO:0005737">
    <property type="term" value="C:cytoplasm"/>
    <property type="evidence" value="ECO:0007669"/>
    <property type="project" value="UniProtKB-ARBA"/>
</dbReference>
<dbReference type="GO" id="GO:1990904">
    <property type="term" value="C:ribonucleoprotein complex"/>
    <property type="evidence" value="ECO:0007669"/>
    <property type="project" value="UniProtKB-KW"/>
</dbReference>
<dbReference type="GO" id="GO:0005840">
    <property type="term" value="C:ribosome"/>
    <property type="evidence" value="ECO:0007669"/>
    <property type="project" value="UniProtKB-KW"/>
</dbReference>
<dbReference type="GO" id="GO:0019843">
    <property type="term" value="F:rRNA binding"/>
    <property type="evidence" value="ECO:0007669"/>
    <property type="project" value="UniProtKB-UniRule"/>
</dbReference>
<dbReference type="GO" id="GO:0003735">
    <property type="term" value="F:structural constituent of ribosome"/>
    <property type="evidence" value="ECO:0007669"/>
    <property type="project" value="InterPro"/>
</dbReference>
<dbReference type="GO" id="GO:0006412">
    <property type="term" value="P:translation"/>
    <property type="evidence" value="ECO:0007669"/>
    <property type="project" value="UniProtKB-UniRule"/>
</dbReference>
<dbReference type="HAMAP" id="MF_01363">
    <property type="entry name" value="Ribosomal_bL21"/>
    <property type="match status" value="1"/>
</dbReference>
<dbReference type="InterPro" id="IPR028909">
    <property type="entry name" value="bL21-like"/>
</dbReference>
<dbReference type="InterPro" id="IPR036164">
    <property type="entry name" value="bL21-like_sf"/>
</dbReference>
<dbReference type="InterPro" id="IPR001787">
    <property type="entry name" value="Ribosomal_bL21"/>
</dbReference>
<dbReference type="InterPro" id="IPR018258">
    <property type="entry name" value="Ribosomal_bL21_CS"/>
</dbReference>
<dbReference type="NCBIfam" id="TIGR00061">
    <property type="entry name" value="L21"/>
    <property type="match status" value="1"/>
</dbReference>
<dbReference type="PANTHER" id="PTHR21349">
    <property type="entry name" value="50S RIBOSOMAL PROTEIN L21"/>
    <property type="match status" value="1"/>
</dbReference>
<dbReference type="PANTHER" id="PTHR21349:SF0">
    <property type="entry name" value="LARGE RIBOSOMAL SUBUNIT PROTEIN BL21M"/>
    <property type="match status" value="1"/>
</dbReference>
<dbReference type="Pfam" id="PF00829">
    <property type="entry name" value="Ribosomal_L21p"/>
    <property type="match status" value="1"/>
</dbReference>
<dbReference type="SUPFAM" id="SSF141091">
    <property type="entry name" value="L21p-like"/>
    <property type="match status" value="1"/>
</dbReference>
<dbReference type="PROSITE" id="PS01169">
    <property type="entry name" value="RIBOSOMAL_L21"/>
    <property type="match status" value="1"/>
</dbReference>
<feature type="chain" id="PRO_1000143806" description="Large ribosomal subunit protein bL21">
    <location>
        <begin position="1"/>
        <end position="104"/>
    </location>
</feature>
<name>RL21_HELP2</name>
<keyword id="KW-0687">Ribonucleoprotein</keyword>
<keyword id="KW-0689">Ribosomal protein</keyword>
<keyword id="KW-0694">RNA-binding</keyword>
<keyword id="KW-0699">rRNA-binding</keyword>
<comment type="function">
    <text evidence="1">This protein binds to 23S rRNA in the presence of protein L20.</text>
</comment>
<comment type="subunit">
    <text evidence="1">Part of the 50S ribosomal subunit. Contacts protein L20.</text>
</comment>
<comment type="similarity">
    <text evidence="1">Belongs to the bacterial ribosomal protein bL21 family.</text>
</comment>
<proteinExistence type="inferred from homology"/>
<organism>
    <name type="scientific">Helicobacter pylori (strain P12)</name>
    <dbReference type="NCBI Taxonomy" id="570508"/>
    <lineage>
        <taxon>Bacteria</taxon>
        <taxon>Pseudomonadati</taxon>
        <taxon>Campylobacterota</taxon>
        <taxon>Epsilonproteobacteria</taxon>
        <taxon>Campylobacterales</taxon>
        <taxon>Helicobacteraceae</taxon>
        <taxon>Helicobacter</taxon>
    </lineage>
</organism>
<protein>
    <recommendedName>
        <fullName evidence="1">Large ribosomal subunit protein bL21</fullName>
    </recommendedName>
    <alternativeName>
        <fullName evidence="2">50S ribosomal protein L21</fullName>
    </alternativeName>
</protein>